<dbReference type="EC" id="2.5.1.6" evidence="1"/>
<dbReference type="EMBL" id="CT573326">
    <property type="protein sequence ID" value="CAK17660.1"/>
    <property type="molecule type" value="Genomic_DNA"/>
</dbReference>
<dbReference type="RefSeq" id="WP_011536020.1">
    <property type="nucleotide sequence ID" value="NC_008027.1"/>
</dbReference>
<dbReference type="SMR" id="Q1I3X6"/>
<dbReference type="STRING" id="384676.PSEEN5026"/>
<dbReference type="GeneID" id="32807965"/>
<dbReference type="KEGG" id="pen:PSEEN5026"/>
<dbReference type="eggNOG" id="COG0192">
    <property type="taxonomic scope" value="Bacteria"/>
</dbReference>
<dbReference type="HOGENOM" id="CLU_041802_1_1_6"/>
<dbReference type="OrthoDB" id="9801686at2"/>
<dbReference type="UniPathway" id="UPA00315">
    <property type="reaction ID" value="UER00080"/>
</dbReference>
<dbReference type="Proteomes" id="UP000000658">
    <property type="component" value="Chromosome"/>
</dbReference>
<dbReference type="GO" id="GO:0005737">
    <property type="term" value="C:cytoplasm"/>
    <property type="evidence" value="ECO:0007669"/>
    <property type="project" value="UniProtKB-SubCell"/>
</dbReference>
<dbReference type="GO" id="GO:0005524">
    <property type="term" value="F:ATP binding"/>
    <property type="evidence" value="ECO:0007669"/>
    <property type="project" value="UniProtKB-UniRule"/>
</dbReference>
<dbReference type="GO" id="GO:0000287">
    <property type="term" value="F:magnesium ion binding"/>
    <property type="evidence" value="ECO:0007669"/>
    <property type="project" value="UniProtKB-UniRule"/>
</dbReference>
<dbReference type="GO" id="GO:0004478">
    <property type="term" value="F:methionine adenosyltransferase activity"/>
    <property type="evidence" value="ECO:0007669"/>
    <property type="project" value="UniProtKB-UniRule"/>
</dbReference>
<dbReference type="GO" id="GO:0006730">
    <property type="term" value="P:one-carbon metabolic process"/>
    <property type="evidence" value="ECO:0007669"/>
    <property type="project" value="UniProtKB-KW"/>
</dbReference>
<dbReference type="GO" id="GO:0006556">
    <property type="term" value="P:S-adenosylmethionine biosynthetic process"/>
    <property type="evidence" value="ECO:0007669"/>
    <property type="project" value="UniProtKB-UniRule"/>
</dbReference>
<dbReference type="CDD" id="cd18079">
    <property type="entry name" value="S-AdoMet_synt"/>
    <property type="match status" value="1"/>
</dbReference>
<dbReference type="FunFam" id="3.30.300.10:FF:000003">
    <property type="entry name" value="S-adenosylmethionine synthase"/>
    <property type="match status" value="1"/>
</dbReference>
<dbReference type="Gene3D" id="3.30.300.10">
    <property type="match status" value="3"/>
</dbReference>
<dbReference type="HAMAP" id="MF_00086">
    <property type="entry name" value="S_AdoMet_synth1"/>
    <property type="match status" value="1"/>
</dbReference>
<dbReference type="InterPro" id="IPR022631">
    <property type="entry name" value="ADOMET_SYNTHASE_CS"/>
</dbReference>
<dbReference type="InterPro" id="IPR022630">
    <property type="entry name" value="S-AdoMet_synt_C"/>
</dbReference>
<dbReference type="InterPro" id="IPR022629">
    <property type="entry name" value="S-AdoMet_synt_central"/>
</dbReference>
<dbReference type="InterPro" id="IPR022628">
    <property type="entry name" value="S-AdoMet_synt_N"/>
</dbReference>
<dbReference type="InterPro" id="IPR002133">
    <property type="entry name" value="S-AdoMet_synthetase"/>
</dbReference>
<dbReference type="InterPro" id="IPR022636">
    <property type="entry name" value="S-AdoMet_synthetase_sfam"/>
</dbReference>
<dbReference type="NCBIfam" id="TIGR01034">
    <property type="entry name" value="metK"/>
    <property type="match status" value="1"/>
</dbReference>
<dbReference type="PANTHER" id="PTHR11964">
    <property type="entry name" value="S-ADENOSYLMETHIONINE SYNTHETASE"/>
    <property type="match status" value="1"/>
</dbReference>
<dbReference type="Pfam" id="PF02773">
    <property type="entry name" value="S-AdoMet_synt_C"/>
    <property type="match status" value="1"/>
</dbReference>
<dbReference type="Pfam" id="PF02772">
    <property type="entry name" value="S-AdoMet_synt_M"/>
    <property type="match status" value="1"/>
</dbReference>
<dbReference type="Pfam" id="PF00438">
    <property type="entry name" value="S-AdoMet_synt_N"/>
    <property type="match status" value="1"/>
</dbReference>
<dbReference type="PIRSF" id="PIRSF000497">
    <property type="entry name" value="MAT"/>
    <property type="match status" value="1"/>
</dbReference>
<dbReference type="SUPFAM" id="SSF55973">
    <property type="entry name" value="S-adenosylmethionine synthetase"/>
    <property type="match status" value="3"/>
</dbReference>
<dbReference type="PROSITE" id="PS00376">
    <property type="entry name" value="ADOMET_SYNTHASE_1"/>
    <property type="match status" value="1"/>
</dbReference>
<dbReference type="PROSITE" id="PS00377">
    <property type="entry name" value="ADOMET_SYNTHASE_2"/>
    <property type="match status" value="1"/>
</dbReference>
<accession>Q1I3X6</accession>
<comment type="function">
    <text evidence="1">Catalyzes the formation of S-adenosylmethionine (AdoMet) from methionine and ATP. The overall synthetic reaction is composed of two sequential steps, AdoMet formation and the subsequent tripolyphosphate hydrolysis which occurs prior to release of AdoMet from the enzyme.</text>
</comment>
<comment type="catalytic activity">
    <reaction evidence="1">
        <text>L-methionine + ATP + H2O = S-adenosyl-L-methionine + phosphate + diphosphate</text>
        <dbReference type="Rhea" id="RHEA:21080"/>
        <dbReference type="ChEBI" id="CHEBI:15377"/>
        <dbReference type="ChEBI" id="CHEBI:30616"/>
        <dbReference type="ChEBI" id="CHEBI:33019"/>
        <dbReference type="ChEBI" id="CHEBI:43474"/>
        <dbReference type="ChEBI" id="CHEBI:57844"/>
        <dbReference type="ChEBI" id="CHEBI:59789"/>
        <dbReference type="EC" id="2.5.1.6"/>
    </reaction>
</comment>
<comment type="cofactor">
    <cofactor evidence="1">
        <name>Mg(2+)</name>
        <dbReference type="ChEBI" id="CHEBI:18420"/>
    </cofactor>
    <text evidence="1">Binds 2 divalent ions per subunit.</text>
</comment>
<comment type="cofactor">
    <cofactor evidence="1">
        <name>K(+)</name>
        <dbReference type="ChEBI" id="CHEBI:29103"/>
    </cofactor>
    <text evidence="1">Binds 1 potassium ion per subunit.</text>
</comment>
<comment type="pathway">
    <text evidence="1">Amino-acid biosynthesis; S-adenosyl-L-methionine biosynthesis; S-adenosyl-L-methionine from L-methionine: step 1/1.</text>
</comment>
<comment type="subunit">
    <text evidence="1">Homotetramer; dimer of dimers.</text>
</comment>
<comment type="subcellular location">
    <subcellularLocation>
        <location evidence="1">Cytoplasm</location>
    </subcellularLocation>
</comment>
<comment type="similarity">
    <text evidence="1">Belongs to the AdoMet synthase family.</text>
</comment>
<feature type="chain" id="PRO_0000302965" description="S-adenosylmethionine synthase">
    <location>
        <begin position="1"/>
        <end position="396"/>
    </location>
</feature>
<feature type="region of interest" description="Flexible loop" evidence="1">
    <location>
        <begin position="100"/>
        <end position="110"/>
    </location>
</feature>
<feature type="binding site" description="in other chain" evidence="1">
    <location>
        <position position="16"/>
    </location>
    <ligand>
        <name>ATP</name>
        <dbReference type="ChEBI" id="CHEBI:30616"/>
        <note>ligand shared between two neighboring subunits</note>
    </ligand>
</feature>
<feature type="binding site" evidence="1">
    <location>
        <position position="18"/>
    </location>
    <ligand>
        <name>Mg(2+)</name>
        <dbReference type="ChEBI" id="CHEBI:18420"/>
    </ligand>
</feature>
<feature type="binding site" evidence="1">
    <location>
        <position position="44"/>
    </location>
    <ligand>
        <name>K(+)</name>
        <dbReference type="ChEBI" id="CHEBI:29103"/>
    </ligand>
</feature>
<feature type="binding site" description="in other chain" evidence="1">
    <location>
        <position position="57"/>
    </location>
    <ligand>
        <name>L-methionine</name>
        <dbReference type="ChEBI" id="CHEBI:57844"/>
        <note>ligand shared between two neighboring subunits</note>
    </ligand>
</feature>
<feature type="binding site" description="in other chain" evidence="1">
    <location>
        <position position="100"/>
    </location>
    <ligand>
        <name>L-methionine</name>
        <dbReference type="ChEBI" id="CHEBI:57844"/>
        <note>ligand shared between two neighboring subunits</note>
    </ligand>
</feature>
<feature type="binding site" description="in other chain" evidence="1">
    <location>
        <begin position="165"/>
        <end position="167"/>
    </location>
    <ligand>
        <name>ATP</name>
        <dbReference type="ChEBI" id="CHEBI:30616"/>
        <note>ligand shared between two neighboring subunits</note>
    </ligand>
</feature>
<feature type="binding site" evidence="1">
    <location>
        <position position="240"/>
    </location>
    <ligand>
        <name>ATP</name>
        <dbReference type="ChEBI" id="CHEBI:30616"/>
        <note>ligand shared between two neighboring subunits</note>
    </ligand>
</feature>
<feature type="binding site" evidence="1">
    <location>
        <position position="240"/>
    </location>
    <ligand>
        <name>L-methionine</name>
        <dbReference type="ChEBI" id="CHEBI:57844"/>
        <note>ligand shared between two neighboring subunits</note>
    </ligand>
</feature>
<feature type="binding site" description="in other chain" evidence="1">
    <location>
        <begin position="246"/>
        <end position="247"/>
    </location>
    <ligand>
        <name>ATP</name>
        <dbReference type="ChEBI" id="CHEBI:30616"/>
        <note>ligand shared between two neighboring subunits</note>
    </ligand>
</feature>
<feature type="binding site" evidence="1">
    <location>
        <position position="263"/>
    </location>
    <ligand>
        <name>ATP</name>
        <dbReference type="ChEBI" id="CHEBI:30616"/>
        <note>ligand shared between two neighboring subunits</note>
    </ligand>
</feature>
<feature type="binding site" evidence="1">
    <location>
        <position position="267"/>
    </location>
    <ligand>
        <name>ATP</name>
        <dbReference type="ChEBI" id="CHEBI:30616"/>
        <note>ligand shared between two neighboring subunits</note>
    </ligand>
</feature>
<feature type="binding site" description="in other chain" evidence="1">
    <location>
        <position position="271"/>
    </location>
    <ligand>
        <name>L-methionine</name>
        <dbReference type="ChEBI" id="CHEBI:57844"/>
        <note>ligand shared between two neighboring subunits</note>
    </ligand>
</feature>
<reference key="1">
    <citation type="journal article" date="2006" name="Nat. Biotechnol.">
        <title>Complete genome sequence of the entomopathogenic and metabolically versatile soil bacterium Pseudomonas entomophila.</title>
        <authorList>
            <person name="Vodovar N."/>
            <person name="Vallenet D."/>
            <person name="Cruveiller S."/>
            <person name="Rouy Z."/>
            <person name="Barbe V."/>
            <person name="Acosta C."/>
            <person name="Cattolico L."/>
            <person name="Jubin C."/>
            <person name="Lajus A."/>
            <person name="Segurens B."/>
            <person name="Vacherie B."/>
            <person name="Wincker P."/>
            <person name="Weissenbach J."/>
            <person name="Lemaitre B."/>
            <person name="Medigue C."/>
            <person name="Boccard F."/>
        </authorList>
    </citation>
    <scope>NUCLEOTIDE SEQUENCE [LARGE SCALE GENOMIC DNA]</scope>
    <source>
        <strain>L48</strain>
    </source>
</reference>
<gene>
    <name evidence="1" type="primary">metK</name>
    <name type="ordered locus">PSEEN5026</name>
</gene>
<proteinExistence type="inferred from homology"/>
<evidence type="ECO:0000255" key="1">
    <source>
        <dbReference type="HAMAP-Rule" id="MF_00086"/>
    </source>
</evidence>
<name>METK_PSEE4</name>
<organism>
    <name type="scientific">Pseudomonas entomophila (strain L48)</name>
    <dbReference type="NCBI Taxonomy" id="384676"/>
    <lineage>
        <taxon>Bacteria</taxon>
        <taxon>Pseudomonadati</taxon>
        <taxon>Pseudomonadota</taxon>
        <taxon>Gammaproteobacteria</taxon>
        <taxon>Pseudomonadales</taxon>
        <taxon>Pseudomonadaceae</taxon>
        <taxon>Pseudomonas</taxon>
    </lineage>
</organism>
<keyword id="KW-0067">ATP-binding</keyword>
<keyword id="KW-0963">Cytoplasm</keyword>
<keyword id="KW-0460">Magnesium</keyword>
<keyword id="KW-0479">Metal-binding</keyword>
<keyword id="KW-0547">Nucleotide-binding</keyword>
<keyword id="KW-0554">One-carbon metabolism</keyword>
<keyword id="KW-0630">Potassium</keyword>
<keyword id="KW-0808">Transferase</keyword>
<protein>
    <recommendedName>
        <fullName evidence="1">S-adenosylmethionine synthase</fullName>
        <shortName evidence="1">AdoMet synthase</shortName>
        <ecNumber evidence="1">2.5.1.6</ecNumber>
    </recommendedName>
    <alternativeName>
        <fullName evidence="1">MAT</fullName>
    </alternativeName>
    <alternativeName>
        <fullName evidence="1">Methionine adenosyltransferase</fullName>
    </alternativeName>
</protein>
<sequence>MSEYSLFTSESVSEGHPDKIADQISDAVLDAIIAQDKYARVACETLVKTGVAIIAGEVTTSAWVDLEELVRKVIIDIGYNSSDVGFDGATCAVMNIIGKQSVDIAQGVDRSKPEDQGAGDQGLMFGYASNETDVLMPAPICFSHRLVERQAEARKSGLLPWLRPDAKSQVTCRYENGRVVGIDAVVLSTQHNPEVSQKDLQEAVMELIVKHTLPAELLHKGTQYHINPTGNFIIGGPVGDCGLTGRKIIVDSYGGMARHGGGAFSGKDPSKVDRSAAYAGRYVAKNIVAAGLAERCEIQVSYAIGVAQPTSISINTFGTGKVSDDKIVQLVRECFDLRPYAITKMLDLLHPMYQETAAYGHFGRTPQQKTVGDDTFTTFTWERTDRAQALRDAAGL</sequence>